<protein>
    <recommendedName>
        <fullName evidence="1">Gamma-glutamyl phosphate reductase</fullName>
        <shortName evidence="1">GPR</shortName>
        <ecNumber evidence="1">1.2.1.41</ecNumber>
    </recommendedName>
    <alternativeName>
        <fullName evidence="1">Glutamate-5-semialdehyde dehydrogenase</fullName>
    </alternativeName>
    <alternativeName>
        <fullName evidence="1">Glutamyl-gamma-semialdehyde dehydrogenase</fullName>
        <shortName evidence="1">GSA dehydrogenase</shortName>
    </alternativeName>
</protein>
<reference key="1">
    <citation type="journal article" date="2006" name="Proc. Natl. Acad. Sci. U.S.A.">
        <title>Comparative genomics of the lactic acid bacteria.</title>
        <authorList>
            <person name="Makarova K.S."/>
            <person name="Slesarev A."/>
            <person name="Wolf Y.I."/>
            <person name="Sorokin A."/>
            <person name="Mirkin B."/>
            <person name="Koonin E.V."/>
            <person name="Pavlov A."/>
            <person name="Pavlova N."/>
            <person name="Karamychev V."/>
            <person name="Polouchine N."/>
            <person name="Shakhova V."/>
            <person name="Grigoriev I."/>
            <person name="Lou Y."/>
            <person name="Rohksar D."/>
            <person name="Lucas S."/>
            <person name="Huang K."/>
            <person name="Goodstein D.M."/>
            <person name="Hawkins T."/>
            <person name="Plengvidhya V."/>
            <person name="Welker D."/>
            <person name="Hughes J."/>
            <person name="Goh Y."/>
            <person name="Benson A."/>
            <person name="Baldwin K."/>
            <person name="Lee J.-H."/>
            <person name="Diaz-Muniz I."/>
            <person name="Dosti B."/>
            <person name="Smeianov V."/>
            <person name="Wechter W."/>
            <person name="Barabote R."/>
            <person name="Lorca G."/>
            <person name="Altermann E."/>
            <person name="Barrangou R."/>
            <person name="Ganesan B."/>
            <person name="Xie Y."/>
            <person name="Rawsthorne H."/>
            <person name="Tamir D."/>
            <person name="Parker C."/>
            <person name="Breidt F."/>
            <person name="Broadbent J.R."/>
            <person name="Hutkins R."/>
            <person name="O'Sullivan D."/>
            <person name="Steele J."/>
            <person name="Unlu G."/>
            <person name="Saier M.H. Jr."/>
            <person name="Klaenhammer T."/>
            <person name="Richardson P."/>
            <person name="Kozyavkin S."/>
            <person name="Weimer B.C."/>
            <person name="Mills D.A."/>
        </authorList>
    </citation>
    <scope>NUCLEOTIDE SEQUENCE [LARGE SCALE GENOMIC DNA]</scope>
    <source>
        <strain>ATCC BAA-491 / LMD-9</strain>
    </source>
</reference>
<comment type="function">
    <text evidence="1">Catalyzes the NADPH-dependent reduction of L-glutamate 5-phosphate into L-glutamate 5-semialdehyde and phosphate. The product spontaneously undergoes cyclization to form 1-pyrroline-5-carboxylate.</text>
</comment>
<comment type="catalytic activity">
    <reaction evidence="1">
        <text>L-glutamate 5-semialdehyde + phosphate + NADP(+) = L-glutamyl 5-phosphate + NADPH + H(+)</text>
        <dbReference type="Rhea" id="RHEA:19541"/>
        <dbReference type="ChEBI" id="CHEBI:15378"/>
        <dbReference type="ChEBI" id="CHEBI:43474"/>
        <dbReference type="ChEBI" id="CHEBI:57783"/>
        <dbReference type="ChEBI" id="CHEBI:58066"/>
        <dbReference type="ChEBI" id="CHEBI:58274"/>
        <dbReference type="ChEBI" id="CHEBI:58349"/>
        <dbReference type="EC" id="1.2.1.41"/>
    </reaction>
</comment>
<comment type="pathway">
    <text evidence="1">Amino-acid biosynthesis; L-proline biosynthesis; L-glutamate 5-semialdehyde from L-glutamate: step 2/2.</text>
</comment>
<comment type="subcellular location">
    <subcellularLocation>
        <location evidence="1">Cytoplasm</location>
    </subcellularLocation>
</comment>
<comment type="similarity">
    <text evidence="1">Belongs to the gamma-glutamyl phosphate reductase family.</text>
</comment>
<keyword id="KW-0028">Amino-acid biosynthesis</keyword>
<keyword id="KW-0963">Cytoplasm</keyword>
<keyword id="KW-0521">NADP</keyword>
<keyword id="KW-0560">Oxidoreductase</keyword>
<keyword id="KW-0641">Proline biosynthesis</keyword>
<gene>
    <name evidence="1" type="primary">proA</name>
    <name type="ordered locus">STER_1675</name>
</gene>
<dbReference type="EC" id="1.2.1.41" evidence="1"/>
<dbReference type="EMBL" id="CP000419">
    <property type="protein sequence ID" value="ABJ66819.1"/>
    <property type="molecule type" value="Genomic_DNA"/>
</dbReference>
<dbReference type="RefSeq" id="WP_011681590.1">
    <property type="nucleotide sequence ID" value="NC_008532.1"/>
</dbReference>
<dbReference type="SMR" id="Q03J03"/>
<dbReference type="KEGG" id="ste:STER_1675"/>
<dbReference type="HOGENOM" id="CLU_030231_0_0_9"/>
<dbReference type="UniPathway" id="UPA00098">
    <property type="reaction ID" value="UER00360"/>
</dbReference>
<dbReference type="GO" id="GO:0005737">
    <property type="term" value="C:cytoplasm"/>
    <property type="evidence" value="ECO:0007669"/>
    <property type="project" value="UniProtKB-SubCell"/>
</dbReference>
<dbReference type="GO" id="GO:0004350">
    <property type="term" value="F:glutamate-5-semialdehyde dehydrogenase activity"/>
    <property type="evidence" value="ECO:0007669"/>
    <property type="project" value="UniProtKB-UniRule"/>
</dbReference>
<dbReference type="GO" id="GO:0050661">
    <property type="term" value="F:NADP binding"/>
    <property type="evidence" value="ECO:0007669"/>
    <property type="project" value="InterPro"/>
</dbReference>
<dbReference type="GO" id="GO:0055129">
    <property type="term" value="P:L-proline biosynthetic process"/>
    <property type="evidence" value="ECO:0007669"/>
    <property type="project" value="UniProtKB-UniRule"/>
</dbReference>
<dbReference type="CDD" id="cd07079">
    <property type="entry name" value="ALDH_F18-19_ProA-GPR"/>
    <property type="match status" value="1"/>
</dbReference>
<dbReference type="FunFam" id="3.40.309.10:FF:000006">
    <property type="entry name" value="Gamma-glutamyl phosphate reductase"/>
    <property type="match status" value="1"/>
</dbReference>
<dbReference type="Gene3D" id="3.40.605.10">
    <property type="entry name" value="Aldehyde Dehydrogenase, Chain A, domain 1"/>
    <property type="match status" value="1"/>
</dbReference>
<dbReference type="Gene3D" id="3.40.309.10">
    <property type="entry name" value="Aldehyde Dehydrogenase, Chain A, domain 2"/>
    <property type="match status" value="1"/>
</dbReference>
<dbReference type="HAMAP" id="MF_00412">
    <property type="entry name" value="ProA"/>
    <property type="match status" value="1"/>
</dbReference>
<dbReference type="InterPro" id="IPR016161">
    <property type="entry name" value="Ald_DH/histidinol_DH"/>
</dbReference>
<dbReference type="InterPro" id="IPR016163">
    <property type="entry name" value="Ald_DH_C"/>
</dbReference>
<dbReference type="InterPro" id="IPR016162">
    <property type="entry name" value="Ald_DH_N"/>
</dbReference>
<dbReference type="InterPro" id="IPR015590">
    <property type="entry name" value="Aldehyde_DH_dom"/>
</dbReference>
<dbReference type="InterPro" id="IPR020593">
    <property type="entry name" value="G-glutamylP_reductase_CS"/>
</dbReference>
<dbReference type="InterPro" id="IPR012134">
    <property type="entry name" value="Glu-5-SA_DH"/>
</dbReference>
<dbReference type="InterPro" id="IPR000965">
    <property type="entry name" value="GPR_dom"/>
</dbReference>
<dbReference type="NCBIfam" id="NF001221">
    <property type="entry name" value="PRK00197.1"/>
    <property type="match status" value="1"/>
</dbReference>
<dbReference type="NCBIfam" id="TIGR00407">
    <property type="entry name" value="proA"/>
    <property type="match status" value="1"/>
</dbReference>
<dbReference type="PANTHER" id="PTHR11063:SF8">
    <property type="entry name" value="DELTA-1-PYRROLINE-5-CARBOXYLATE SYNTHASE"/>
    <property type="match status" value="1"/>
</dbReference>
<dbReference type="PANTHER" id="PTHR11063">
    <property type="entry name" value="GLUTAMATE SEMIALDEHYDE DEHYDROGENASE"/>
    <property type="match status" value="1"/>
</dbReference>
<dbReference type="Pfam" id="PF00171">
    <property type="entry name" value="Aldedh"/>
    <property type="match status" value="2"/>
</dbReference>
<dbReference type="PIRSF" id="PIRSF000151">
    <property type="entry name" value="GPR"/>
    <property type="match status" value="1"/>
</dbReference>
<dbReference type="SUPFAM" id="SSF53720">
    <property type="entry name" value="ALDH-like"/>
    <property type="match status" value="1"/>
</dbReference>
<dbReference type="PROSITE" id="PS01223">
    <property type="entry name" value="PROA"/>
    <property type="match status" value="1"/>
</dbReference>
<name>PROA_STRTD</name>
<proteinExistence type="inferred from homology"/>
<evidence type="ECO:0000255" key="1">
    <source>
        <dbReference type="HAMAP-Rule" id="MF_00412"/>
    </source>
</evidence>
<feature type="chain" id="PRO_1000050000" description="Gamma-glutamyl phosphate reductase">
    <location>
        <begin position="1"/>
        <end position="416"/>
    </location>
</feature>
<sequence length="416" mass="45338">MTYVDTLGQQAKVASRQIAKLSTAAKNDLLNQVAKALVAESDYIITENAKDIANASENGISKIMQDRLLLTEDRIAGIAEGVRQVADLQDPIGQVVRGYTNLDGLKIVQKRVPMGVIAMIFESRPNVSIDAFSLAFKTNNAIILRGGRDAINSNKALVTVARKALKNAGITADAVQFVEDTSHEVAEELMVATKYVDLLIPRGGARLIQTVKEKAKVPVIETGVGNCHIYVDKYANLDMATQIVINAKTQRPSVCNAAESLVVHADIVEEFLPNLEKAISKIQSVEFRADERALKLMEKAVPASPEDFATEFLDYIMSVKVVDSLDEAINWINTYTTSHSEAIVTQDISRAEQFQDDVDAAAVYVNASTRFTDGFVFGLGAEIGISTQKMHARGPMGLEALTSTKFYINGQGQIRE</sequence>
<organism>
    <name type="scientific">Streptococcus thermophilus (strain ATCC BAA-491 / LMD-9)</name>
    <dbReference type="NCBI Taxonomy" id="322159"/>
    <lineage>
        <taxon>Bacteria</taxon>
        <taxon>Bacillati</taxon>
        <taxon>Bacillota</taxon>
        <taxon>Bacilli</taxon>
        <taxon>Lactobacillales</taxon>
        <taxon>Streptococcaceae</taxon>
        <taxon>Streptococcus</taxon>
    </lineage>
</organism>
<accession>Q03J03</accession>